<gene>
    <name evidence="1" type="primary">alaS</name>
    <name type="ordered locus">Nther_1780</name>
</gene>
<keyword id="KW-0030">Aminoacyl-tRNA synthetase</keyword>
<keyword id="KW-0067">ATP-binding</keyword>
<keyword id="KW-0963">Cytoplasm</keyword>
<keyword id="KW-0436">Ligase</keyword>
<keyword id="KW-0479">Metal-binding</keyword>
<keyword id="KW-0547">Nucleotide-binding</keyword>
<keyword id="KW-0648">Protein biosynthesis</keyword>
<keyword id="KW-1185">Reference proteome</keyword>
<keyword id="KW-0694">RNA-binding</keyword>
<keyword id="KW-0820">tRNA-binding</keyword>
<keyword id="KW-0862">Zinc</keyword>
<evidence type="ECO:0000255" key="1">
    <source>
        <dbReference type="HAMAP-Rule" id="MF_00036"/>
    </source>
</evidence>
<reference key="1">
    <citation type="submission" date="2008-04" db="EMBL/GenBank/DDBJ databases">
        <title>Complete sequence of chromosome of Natranaerobius thermophilus JW/NM-WN-LF.</title>
        <authorList>
            <consortium name="US DOE Joint Genome Institute"/>
            <person name="Copeland A."/>
            <person name="Lucas S."/>
            <person name="Lapidus A."/>
            <person name="Glavina del Rio T."/>
            <person name="Dalin E."/>
            <person name="Tice H."/>
            <person name="Bruce D."/>
            <person name="Goodwin L."/>
            <person name="Pitluck S."/>
            <person name="Chertkov O."/>
            <person name="Brettin T."/>
            <person name="Detter J.C."/>
            <person name="Han C."/>
            <person name="Kuske C.R."/>
            <person name="Schmutz J."/>
            <person name="Larimer F."/>
            <person name="Land M."/>
            <person name="Hauser L."/>
            <person name="Kyrpides N."/>
            <person name="Lykidis A."/>
            <person name="Mesbah N.M."/>
            <person name="Wiegel J."/>
        </authorList>
    </citation>
    <scope>NUCLEOTIDE SEQUENCE [LARGE SCALE GENOMIC DNA]</scope>
    <source>
        <strain>ATCC BAA-1301 / DSM 18059 / JW/NM-WN-LF</strain>
    </source>
</reference>
<name>SYA_NATTJ</name>
<comment type="function">
    <text evidence="1">Catalyzes the attachment of alanine to tRNA(Ala) in a two-step reaction: alanine is first activated by ATP to form Ala-AMP and then transferred to the acceptor end of tRNA(Ala). Also edits incorrectly charged Ser-tRNA(Ala) and Gly-tRNA(Ala) via its editing domain.</text>
</comment>
<comment type="catalytic activity">
    <reaction evidence="1">
        <text>tRNA(Ala) + L-alanine + ATP = L-alanyl-tRNA(Ala) + AMP + diphosphate</text>
        <dbReference type="Rhea" id="RHEA:12540"/>
        <dbReference type="Rhea" id="RHEA-COMP:9657"/>
        <dbReference type="Rhea" id="RHEA-COMP:9923"/>
        <dbReference type="ChEBI" id="CHEBI:30616"/>
        <dbReference type="ChEBI" id="CHEBI:33019"/>
        <dbReference type="ChEBI" id="CHEBI:57972"/>
        <dbReference type="ChEBI" id="CHEBI:78442"/>
        <dbReference type="ChEBI" id="CHEBI:78497"/>
        <dbReference type="ChEBI" id="CHEBI:456215"/>
        <dbReference type="EC" id="6.1.1.7"/>
    </reaction>
</comment>
<comment type="cofactor">
    <cofactor evidence="1">
        <name>Zn(2+)</name>
        <dbReference type="ChEBI" id="CHEBI:29105"/>
    </cofactor>
    <text evidence="1">Binds 1 zinc ion per subunit.</text>
</comment>
<comment type="subcellular location">
    <subcellularLocation>
        <location evidence="1">Cytoplasm</location>
    </subcellularLocation>
</comment>
<comment type="domain">
    <text evidence="1">Consists of three domains; the N-terminal catalytic domain, the editing domain and the C-terminal C-Ala domain. The editing domain removes incorrectly charged amino acids, while the C-Ala domain, along with tRNA(Ala), serves as a bridge to cooperatively bring together the editing and aminoacylation centers thus stimulating deacylation of misacylated tRNAs.</text>
</comment>
<comment type="similarity">
    <text evidence="1">Belongs to the class-II aminoacyl-tRNA synthetase family.</text>
</comment>
<feature type="chain" id="PRO_0000347693" description="Alanine--tRNA ligase">
    <location>
        <begin position="1"/>
        <end position="878"/>
    </location>
</feature>
<feature type="binding site" evidence="1">
    <location>
        <position position="564"/>
    </location>
    <ligand>
        <name>Zn(2+)</name>
        <dbReference type="ChEBI" id="CHEBI:29105"/>
    </ligand>
</feature>
<feature type="binding site" evidence="1">
    <location>
        <position position="568"/>
    </location>
    <ligand>
        <name>Zn(2+)</name>
        <dbReference type="ChEBI" id="CHEBI:29105"/>
    </ligand>
</feature>
<feature type="binding site" evidence="1">
    <location>
        <position position="665"/>
    </location>
    <ligand>
        <name>Zn(2+)</name>
        <dbReference type="ChEBI" id="CHEBI:29105"/>
    </ligand>
</feature>
<feature type="binding site" evidence="1">
    <location>
        <position position="669"/>
    </location>
    <ligand>
        <name>Zn(2+)</name>
        <dbReference type="ChEBI" id="CHEBI:29105"/>
    </ligand>
</feature>
<accession>B2A5J7</accession>
<protein>
    <recommendedName>
        <fullName evidence="1">Alanine--tRNA ligase</fullName>
        <ecNumber evidence="1">6.1.1.7</ecNumber>
    </recommendedName>
    <alternativeName>
        <fullName evidence="1">Alanyl-tRNA synthetase</fullName>
        <shortName evidence="1">AlaRS</shortName>
    </alternativeName>
</protein>
<proteinExistence type="inferred from homology"/>
<dbReference type="EC" id="6.1.1.7" evidence="1"/>
<dbReference type="EMBL" id="CP001034">
    <property type="protein sequence ID" value="ACB85352.1"/>
    <property type="molecule type" value="Genomic_DNA"/>
</dbReference>
<dbReference type="RefSeq" id="WP_012448219.1">
    <property type="nucleotide sequence ID" value="NC_010718.1"/>
</dbReference>
<dbReference type="SMR" id="B2A5J7"/>
<dbReference type="FunCoup" id="B2A5J7">
    <property type="interactions" value="449"/>
</dbReference>
<dbReference type="STRING" id="457570.Nther_1780"/>
<dbReference type="KEGG" id="nth:Nther_1780"/>
<dbReference type="eggNOG" id="COG0013">
    <property type="taxonomic scope" value="Bacteria"/>
</dbReference>
<dbReference type="HOGENOM" id="CLU_004485_1_1_9"/>
<dbReference type="InParanoid" id="B2A5J7"/>
<dbReference type="OrthoDB" id="9803884at2"/>
<dbReference type="Proteomes" id="UP000001683">
    <property type="component" value="Chromosome"/>
</dbReference>
<dbReference type="GO" id="GO:0005829">
    <property type="term" value="C:cytosol"/>
    <property type="evidence" value="ECO:0007669"/>
    <property type="project" value="TreeGrafter"/>
</dbReference>
<dbReference type="GO" id="GO:0004813">
    <property type="term" value="F:alanine-tRNA ligase activity"/>
    <property type="evidence" value="ECO:0007669"/>
    <property type="project" value="UniProtKB-UniRule"/>
</dbReference>
<dbReference type="GO" id="GO:0002161">
    <property type="term" value="F:aminoacyl-tRNA deacylase activity"/>
    <property type="evidence" value="ECO:0007669"/>
    <property type="project" value="TreeGrafter"/>
</dbReference>
<dbReference type="GO" id="GO:0005524">
    <property type="term" value="F:ATP binding"/>
    <property type="evidence" value="ECO:0007669"/>
    <property type="project" value="UniProtKB-UniRule"/>
</dbReference>
<dbReference type="GO" id="GO:0140096">
    <property type="term" value="F:catalytic activity, acting on a protein"/>
    <property type="evidence" value="ECO:0007669"/>
    <property type="project" value="UniProtKB-ARBA"/>
</dbReference>
<dbReference type="GO" id="GO:0016740">
    <property type="term" value="F:transferase activity"/>
    <property type="evidence" value="ECO:0007669"/>
    <property type="project" value="UniProtKB-ARBA"/>
</dbReference>
<dbReference type="GO" id="GO:0000049">
    <property type="term" value="F:tRNA binding"/>
    <property type="evidence" value="ECO:0007669"/>
    <property type="project" value="UniProtKB-KW"/>
</dbReference>
<dbReference type="GO" id="GO:0008270">
    <property type="term" value="F:zinc ion binding"/>
    <property type="evidence" value="ECO:0007669"/>
    <property type="project" value="UniProtKB-UniRule"/>
</dbReference>
<dbReference type="GO" id="GO:0006419">
    <property type="term" value="P:alanyl-tRNA aminoacylation"/>
    <property type="evidence" value="ECO:0007669"/>
    <property type="project" value="UniProtKB-UniRule"/>
</dbReference>
<dbReference type="CDD" id="cd00673">
    <property type="entry name" value="AlaRS_core"/>
    <property type="match status" value="1"/>
</dbReference>
<dbReference type="FunFam" id="3.10.310.40:FF:000001">
    <property type="entry name" value="Alanine--tRNA ligase"/>
    <property type="match status" value="1"/>
</dbReference>
<dbReference type="FunFam" id="3.30.930.10:FF:000004">
    <property type="entry name" value="Alanine--tRNA ligase"/>
    <property type="match status" value="1"/>
</dbReference>
<dbReference type="FunFam" id="3.30.980.10:FF:000004">
    <property type="entry name" value="Alanine--tRNA ligase, cytoplasmic"/>
    <property type="match status" value="1"/>
</dbReference>
<dbReference type="Gene3D" id="2.40.30.130">
    <property type="match status" value="1"/>
</dbReference>
<dbReference type="Gene3D" id="3.10.310.40">
    <property type="match status" value="1"/>
</dbReference>
<dbReference type="Gene3D" id="3.30.54.20">
    <property type="match status" value="1"/>
</dbReference>
<dbReference type="Gene3D" id="6.10.250.550">
    <property type="match status" value="1"/>
</dbReference>
<dbReference type="Gene3D" id="3.30.930.10">
    <property type="entry name" value="Bira Bifunctional Protein, Domain 2"/>
    <property type="match status" value="1"/>
</dbReference>
<dbReference type="Gene3D" id="3.30.980.10">
    <property type="entry name" value="Threonyl-trna Synthetase, Chain A, domain 2"/>
    <property type="match status" value="1"/>
</dbReference>
<dbReference type="HAMAP" id="MF_00036_B">
    <property type="entry name" value="Ala_tRNA_synth_B"/>
    <property type="match status" value="1"/>
</dbReference>
<dbReference type="InterPro" id="IPR045864">
    <property type="entry name" value="aa-tRNA-synth_II/BPL/LPL"/>
</dbReference>
<dbReference type="InterPro" id="IPR002318">
    <property type="entry name" value="Ala-tRNA-lgiase_IIc"/>
</dbReference>
<dbReference type="InterPro" id="IPR018162">
    <property type="entry name" value="Ala-tRNA-ligase_IIc_anticod-bd"/>
</dbReference>
<dbReference type="InterPro" id="IPR018165">
    <property type="entry name" value="Ala-tRNA-synth_IIc_core"/>
</dbReference>
<dbReference type="InterPro" id="IPR018164">
    <property type="entry name" value="Ala-tRNA-synth_IIc_N"/>
</dbReference>
<dbReference type="InterPro" id="IPR050058">
    <property type="entry name" value="Ala-tRNA_ligase"/>
</dbReference>
<dbReference type="InterPro" id="IPR023033">
    <property type="entry name" value="Ala_tRNA_ligase_euk/bac"/>
</dbReference>
<dbReference type="InterPro" id="IPR003156">
    <property type="entry name" value="DHHA1_dom"/>
</dbReference>
<dbReference type="InterPro" id="IPR018163">
    <property type="entry name" value="Thr/Ala-tRNA-synth_IIc_edit"/>
</dbReference>
<dbReference type="InterPro" id="IPR009000">
    <property type="entry name" value="Transl_B-barrel_sf"/>
</dbReference>
<dbReference type="InterPro" id="IPR012947">
    <property type="entry name" value="tRNA_SAD"/>
</dbReference>
<dbReference type="NCBIfam" id="TIGR00344">
    <property type="entry name" value="alaS"/>
    <property type="match status" value="1"/>
</dbReference>
<dbReference type="PANTHER" id="PTHR11777:SF9">
    <property type="entry name" value="ALANINE--TRNA LIGASE, CYTOPLASMIC"/>
    <property type="match status" value="1"/>
</dbReference>
<dbReference type="PANTHER" id="PTHR11777">
    <property type="entry name" value="ALANYL-TRNA SYNTHETASE"/>
    <property type="match status" value="1"/>
</dbReference>
<dbReference type="Pfam" id="PF02272">
    <property type="entry name" value="DHHA1"/>
    <property type="match status" value="1"/>
</dbReference>
<dbReference type="Pfam" id="PF01411">
    <property type="entry name" value="tRNA-synt_2c"/>
    <property type="match status" value="1"/>
</dbReference>
<dbReference type="Pfam" id="PF07973">
    <property type="entry name" value="tRNA_SAD"/>
    <property type="match status" value="1"/>
</dbReference>
<dbReference type="PRINTS" id="PR00980">
    <property type="entry name" value="TRNASYNTHALA"/>
</dbReference>
<dbReference type="SMART" id="SM00863">
    <property type="entry name" value="tRNA_SAD"/>
    <property type="match status" value="1"/>
</dbReference>
<dbReference type="SUPFAM" id="SSF55681">
    <property type="entry name" value="Class II aaRS and biotin synthetases"/>
    <property type="match status" value="1"/>
</dbReference>
<dbReference type="SUPFAM" id="SSF101353">
    <property type="entry name" value="Putative anticodon-binding domain of alanyl-tRNA synthetase (AlaRS)"/>
    <property type="match status" value="1"/>
</dbReference>
<dbReference type="SUPFAM" id="SSF55186">
    <property type="entry name" value="ThrRS/AlaRS common domain"/>
    <property type="match status" value="1"/>
</dbReference>
<dbReference type="SUPFAM" id="SSF50447">
    <property type="entry name" value="Translation proteins"/>
    <property type="match status" value="1"/>
</dbReference>
<dbReference type="PROSITE" id="PS50860">
    <property type="entry name" value="AA_TRNA_LIGASE_II_ALA"/>
    <property type="match status" value="1"/>
</dbReference>
<sequence>MRTHEIRKKFLEFFETKDHYVRKSYSIIPENDPSILLIGAGMAPLKPYFTGEKTPPSPRMATSQKCVRTPDIEEVGITARHATFFEMLGNFSFGDYFKREAIFWGYEFCTEWLSLSPEKLWASVYLDDDEAYDIWHDEVGIPHERIVRLGKEDNFWEIGTGPCGPCSEIHYDRGAEYGCDSPDCKPGCDCDRYLEIWNLVFTQFNRDEEGNYTTLKQKNIDTGAGLERLAVLLQDVPSIYEIDIIKPILDHVIQLSGVNYGEDNDKDISLRIITEHLRSVTFIVGDGVLPANEGRGYVLRRILRRASRHGKLLGIKDTFMSDGVDLVIDIMKEAYPELEERREYIKKIVEIEEDRFNKTVDQGLGILNEFLENMNKQGKNTLEGSDAFKLYDTYGFPLELTREIVQENGYTLDEQGFQEELNRQREQARKAQQESEGMLTESNAMKQFQDQKVEFTGYDNLEQESQIIGIIDHKNDDLLKEVQEGEEVQILINPTPFYGESGGQIGDTGEIFSDNGRAHVKNSSVNGYDQTVLQVKVTDGQLRTGDKVSGKVDYQRRKDIMKNHSATHMLHYALKKVVGAHVEQAGSLVAPDRLRFDFTHFAPLSEDEIKQIELEVNKLIRENSRVRVINTDLEEAKELGAVALFEDKYEQEVRVIEIGPAVELCGGTHATATGELGLFKIDNQTSVGAGVRRLEALTGQHALEYLDQKAEQIQDIAELLKTEENKVVEKTQEFLEDFKAKDKEIEKLKNQIFTFKVDDLLAQSKDISDFKLVANQLNDFDADSLRDLSERVKNKLDSGVVVLGSSTNNKALFVAMVTKDLVEKGVHAGNIVKEVAKITGGGGGGRPDMAQAGGKEPDKLNEAIMKVETLVRNQLSHS</sequence>
<organism>
    <name type="scientific">Natranaerobius thermophilus (strain ATCC BAA-1301 / DSM 18059 / JW/NM-WN-LF)</name>
    <dbReference type="NCBI Taxonomy" id="457570"/>
    <lineage>
        <taxon>Bacteria</taxon>
        <taxon>Bacillati</taxon>
        <taxon>Bacillota</taxon>
        <taxon>Clostridia</taxon>
        <taxon>Natranaerobiales</taxon>
        <taxon>Natranaerobiaceae</taxon>
        <taxon>Natranaerobius</taxon>
    </lineage>
</organism>